<keyword id="KW-0002">3D-structure</keyword>
<keyword id="KW-0192">Crown gall tumor</keyword>
<keyword id="KW-0238">DNA-binding</keyword>
<keyword id="KW-1048">Host nucleus</keyword>
<keyword id="KW-0614">Plasmid</keyword>
<keyword id="KW-1185">Reference proteome</keyword>
<keyword id="KW-0964">Secreted</keyword>
<keyword id="KW-0843">Virulence</keyword>
<feature type="chain" id="PRO_0000065866" description="Single-strand DNA-binding protein">
    <location>
        <begin position="1"/>
        <end position="556"/>
    </location>
</feature>
<feature type="region of interest" description="Disordered" evidence="2">
    <location>
        <begin position="1"/>
        <end position="95"/>
    </location>
</feature>
<feature type="region of interest" description="Disordered" evidence="2">
    <location>
        <begin position="527"/>
        <end position="556"/>
    </location>
</feature>
<feature type="compositionally biased region" description="Polar residues" evidence="2">
    <location>
        <begin position="10"/>
        <end position="25"/>
    </location>
</feature>
<feature type="compositionally biased region" description="Polar residues" evidence="2">
    <location>
        <begin position="36"/>
        <end position="51"/>
    </location>
</feature>
<feature type="compositionally biased region" description="Basic and acidic residues" evidence="2">
    <location>
        <begin position="52"/>
        <end position="73"/>
    </location>
</feature>
<feature type="compositionally biased region" description="Basic and acidic residues" evidence="2">
    <location>
        <begin position="539"/>
        <end position="548"/>
    </location>
</feature>
<feature type="sequence conflict" description="In Ref. 1; AAA98372 and 2; AAA91610." evidence="8" ref="1 2">
    <original>A</original>
    <variation>R</variation>
    <location>
        <position position="282"/>
    </location>
</feature>
<feature type="strand" evidence="9">
    <location>
        <begin position="116"/>
        <end position="124"/>
    </location>
</feature>
<feature type="strand" evidence="9">
    <location>
        <begin position="127"/>
        <end position="132"/>
    </location>
</feature>
<feature type="helix" evidence="9">
    <location>
        <begin position="133"/>
        <end position="135"/>
    </location>
</feature>
<feature type="helix" evidence="9">
    <location>
        <begin position="142"/>
        <end position="147"/>
    </location>
</feature>
<feature type="strand" evidence="9">
    <location>
        <begin position="148"/>
        <end position="153"/>
    </location>
</feature>
<feature type="helix" evidence="9">
    <location>
        <begin position="162"/>
        <end position="167"/>
    </location>
</feature>
<feature type="helix" evidence="9">
    <location>
        <begin position="173"/>
        <end position="177"/>
    </location>
</feature>
<feature type="helix" evidence="9">
    <location>
        <begin position="186"/>
        <end position="206"/>
    </location>
</feature>
<feature type="helix" evidence="9">
    <location>
        <begin position="231"/>
        <end position="233"/>
    </location>
</feature>
<feature type="strand" evidence="9">
    <location>
        <begin position="234"/>
        <end position="237"/>
    </location>
</feature>
<feature type="strand" evidence="9">
    <location>
        <begin position="239"/>
        <end position="241"/>
    </location>
</feature>
<feature type="strand" evidence="9">
    <location>
        <begin position="243"/>
        <end position="245"/>
    </location>
</feature>
<feature type="strand" evidence="9">
    <location>
        <begin position="250"/>
        <end position="252"/>
    </location>
</feature>
<feature type="turn" evidence="9">
    <location>
        <begin position="253"/>
        <end position="259"/>
    </location>
</feature>
<feature type="strand" evidence="9">
    <location>
        <begin position="262"/>
        <end position="266"/>
    </location>
</feature>
<feature type="strand" evidence="9">
    <location>
        <begin position="271"/>
        <end position="275"/>
    </location>
</feature>
<feature type="turn" evidence="9">
    <location>
        <begin position="282"/>
        <end position="285"/>
    </location>
</feature>
<feature type="helix" evidence="9">
    <location>
        <begin position="288"/>
        <end position="299"/>
    </location>
</feature>
<feature type="strand" evidence="9">
    <location>
        <begin position="304"/>
        <end position="308"/>
    </location>
</feature>
<feature type="strand" evidence="9">
    <location>
        <begin position="314"/>
        <end position="316"/>
    </location>
</feature>
<feature type="helix" evidence="9">
    <location>
        <begin position="317"/>
        <end position="323"/>
    </location>
</feature>
<feature type="helix" evidence="9">
    <location>
        <begin position="327"/>
        <end position="335"/>
    </location>
</feature>
<feature type="strand" evidence="9">
    <location>
        <begin position="348"/>
        <end position="352"/>
    </location>
</feature>
<feature type="strand" evidence="9">
    <location>
        <begin position="367"/>
        <end position="370"/>
    </location>
</feature>
<feature type="helix" evidence="9">
    <location>
        <begin position="371"/>
        <end position="377"/>
    </location>
</feature>
<feature type="helix" evidence="9">
    <location>
        <begin position="382"/>
        <end position="388"/>
    </location>
</feature>
<feature type="helix" evidence="9">
    <location>
        <begin position="393"/>
        <end position="395"/>
    </location>
</feature>
<feature type="strand" evidence="9">
    <location>
        <begin position="396"/>
        <end position="399"/>
    </location>
</feature>
<feature type="strand" evidence="9">
    <location>
        <begin position="403"/>
        <end position="407"/>
    </location>
</feature>
<feature type="helix" evidence="9">
    <location>
        <begin position="409"/>
        <end position="415"/>
    </location>
</feature>
<feature type="helix" evidence="9">
    <location>
        <begin position="417"/>
        <end position="427"/>
    </location>
</feature>
<feature type="helix" evidence="9">
    <location>
        <begin position="431"/>
        <end position="435"/>
    </location>
</feature>
<feature type="strand" evidence="9">
    <location>
        <begin position="452"/>
        <end position="456"/>
    </location>
</feature>
<feature type="strand" evidence="9">
    <location>
        <begin position="458"/>
        <end position="462"/>
    </location>
</feature>
<feature type="helix" evidence="9">
    <location>
        <begin position="464"/>
        <end position="466"/>
    </location>
</feature>
<feature type="turn" evidence="9">
    <location>
        <begin position="469"/>
        <end position="471"/>
    </location>
</feature>
<feature type="strand" evidence="9">
    <location>
        <begin position="480"/>
        <end position="485"/>
    </location>
</feature>
<feature type="strand" evidence="9">
    <location>
        <begin position="491"/>
        <end position="497"/>
    </location>
</feature>
<feature type="helix" evidence="9">
    <location>
        <begin position="498"/>
        <end position="503"/>
    </location>
</feature>
<feature type="helix" evidence="9">
    <location>
        <begin position="510"/>
        <end position="515"/>
    </location>
</feature>
<proteinExistence type="evidence at protein level"/>
<accession>P08062</accession>
<name>VIRE2_AGRFC</name>
<comment type="function">
    <text evidence="3 5 7">Involved in DNA transformation; mediates the nuclear uptake of single-stranded DNA copies of the transferred DNA (T-DNA) element. Binds single-stranded but not double-stranded DNA regardless of nucleotide sequence composition.</text>
</comment>
<comment type="subunit">
    <text evidence="1 3 6">Interacts with host VIP2 that promotes T-DNA integration into the host genome. Forms a complex made of virE2 and host proteins VIP1 and VBF (By similarity). Forms heterodimers with the chaperone protein virE1 that prevent virE2 anarchic homopolymerization. Interacts with A.thaliana VIP1 that mediates its translocation to the host nucleus. Forms a complex made of VirE2, host VIP1 and VIP2 and single-stranded DNA (ssDNA).</text>
</comment>
<comment type="interaction">
    <interactant intactId="EBI-6402090">
        <id>P08062</id>
    </interactant>
    <interactant intactId="EBI-6402090">
        <id>P08062</id>
        <label>virE2</label>
    </interactant>
    <organismsDiffer>false</organismsDiffer>
    <experiments>3</experiments>
</comment>
<comment type="subcellular location">
    <subcellularLocation>
        <location evidence="4">Secreted</location>
    </subcellularLocation>
    <subcellularLocation>
        <location evidence="1">Host nucleus</location>
    </subcellularLocation>
    <text>In infected cells, it is found in the nucleus.</text>
</comment>
<comment type="induction">
    <text evidence="1">Targeted to degradation by the host proteasome by VBF and Agrobacterium virF in SCF(VBF) and SCF(COI1) E3 ubiquitin ligase complexes after mediating T-DNA translocation to the nucleus.</text>
</comment>
<geneLocation type="plasmid">
    <name>pTiC58</name>
</geneLocation>
<organism>
    <name type="scientific">Agrobacterium fabrum (strain C58 / ATCC 33970)</name>
    <name type="common">Agrobacterium tumefaciens (strain C58)</name>
    <dbReference type="NCBI Taxonomy" id="176299"/>
    <lineage>
        <taxon>Bacteria</taxon>
        <taxon>Pseudomonadati</taxon>
        <taxon>Pseudomonadota</taxon>
        <taxon>Alphaproteobacteria</taxon>
        <taxon>Hyphomicrobiales</taxon>
        <taxon>Rhizobiaceae</taxon>
        <taxon>Rhizobium/Agrobacterium group</taxon>
        <taxon>Agrobacterium</taxon>
        <taxon>Agrobacterium tumefaciens complex</taxon>
    </lineage>
</organism>
<gene>
    <name type="primary">virE2</name>
    <name type="ordered locus">Atu6190</name>
    <name type="ORF">AGR_pTi_28</name>
</gene>
<protein>
    <recommendedName>
        <fullName>Single-strand DNA-binding protein</fullName>
    </recommendedName>
    <alternativeName>
        <fullName>63.5 kDa virulence protein</fullName>
    </alternativeName>
</protein>
<evidence type="ECO:0000250" key="1"/>
<evidence type="ECO:0000256" key="2">
    <source>
        <dbReference type="SAM" id="MobiDB-lite"/>
    </source>
</evidence>
<evidence type="ECO:0000269" key="3">
    <source>
    </source>
</evidence>
<evidence type="ECO:0000269" key="4">
    <source>
    </source>
</evidence>
<evidence type="ECO:0000269" key="5">
    <source>
    </source>
</evidence>
<evidence type="ECO:0000269" key="6">
    <source>
    </source>
</evidence>
<evidence type="ECO:0000269" key="7">
    <source>
    </source>
</evidence>
<evidence type="ECO:0000305" key="8"/>
<evidence type="ECO:0007829" key="9">
    <source>
        <dbReference type="PDB" id="3BTP"/>
    </source>
</evidence>
<dbReference type="EMBL" id="M15814">
    <property type="protein sequence ID" value="AAA98372.1"/>
    <property type="molecule type" value="Genomic_DNA"/>
</dbReference>
<dbReference type="EMBL" id="J03320">
    <property type="protein sequence ID" value="AAA91610.1"/>
    <property type="molecule type" value="Genomic_DNA"/>
</dbReference>
<dbReference type="EMBL" id="AE007871">
    <property type="protein sequence ID" value="AAK90951.1"/>
    <property type="molecule type" value="Genomic_DNA"/>
</dbReference>
<dbReference type="PIR" id="A26939">
    <property type="entry name" value="A26939"/>
</dbReference>
<dbReference type="PIR" id="AD3251">
    <property type="entry name" value="AD3251"/>
</dbReference>
<dbReference type="RefSeq" id="NP_396510.1">
    <property type="nucleotide sequence ID" value="NC_003065.3"/>
</dbReference>
<dbReference type="RefSeq" id="WP_010974922.1">
    <property type="nucleotide sequence ID" value="NC_003065.3"/>
</dbReference>
<dbReference type="PDB" id="3BTP">
    <property type="method" value="X-ray"/>
    <property type="resolution" value="2.30 A"/>
    <property type="chains" value="A=1-556"/>
</dbReference>
<dbReference type="PDB" id="4BLF">
    <property type="method" value="EM"/>
    <property type="resolution" value="20.00 A"/>
    <property type="chains" value="A=112-337"/>
</dbReference>
<dbReference type="PDBsum" id="3BTP"/>
<dbReference type="PDBsum" id="4BLF"/>
<dbReference type="SMR" id="P08062"/>
<dbReference type="DIP" id="DIP-46168N"/>
<dbReference type="IntAct" id="P08062">
    <property type="interactions" value="2"/>
</dbReference>
<dbReference type="EnsemblBacteria" id="AAK90951">
    <property type="protein sequence ID" value="AAK90951"/>
    <property type="gene ID" value="Atu6190"/>
</dbReference>
<dbReference type="GeneID" id="1137513"/>
<dbReference type="KEGG" id="atu:Atu6190"/>
<dbReference type="PATRIC" id="fig|176299.10.peg.5380"/>
<dbReference type="HOGENOM" id="CLU_510604_0_0_5"/>
<dbReference type="OrthoDB" id="8290269at2"/>
<dbReference type="BioCyc" id="AGRO:ATU6190-MONOMER"/>
<dbReference type="EvolutionaryTrace" id="P08062"/>
<dbReference type="Proteomes" id="UP000000813">
    <property type="component" value="Plasmid Ti"/>
</dbReference>
<dbReference type="GO" id="GO:0005576">
    <property type="term" value="C:extracellular region"/>
    <property type="evidence" value="ECO:0007669"/>
    <property type="project" value="UniProtKB-SubCell"/>
</dbReference>
<dbReference type="GO" id="GO:0042025">
    <property type="term" value="C:host cell nucleus"/>
    <property type="evidence" value="ECO:0000250"/>
    <property type="project" value="UniProtKB"/>
</dbReference>
<dbReference type="GO" id="GO:0003677">
    <property type="term" value="F:DNA binding"/>
    <property type="evidence" value="ECO:0000250"/>
    <property type="project" value="UniProtKB"/>
</dbReference>
<dbReference type="GO" id="GO:0042802">
    <property type="term" value="F:identical protein binding"/>
    <property type="evidence" value="ECO:0000353"/>
    <property type="project" value="IntAct"/>
</dbReference>
<dbReference type="GO" id="GO:0009294">
    <property type="term" value="P:DNA-mediated transformation"/>
    <property type="evidence" value="ECO:0000314"/>
    <property type="project" value="UniProtKB"/>
</dbReference>
<dbReference type="InterPro" id="IPR009868">
    <property type="entry name" value="VirE2"/>
</dbReference>
<dbReference type="NCBIfam" id="NF010442">
    <property type="entry name" value="PRK13868.1"/>
    <property type="match status" value="1"/>
</dbReference>
<dbReference type="Pfam" id="PF07229">
    <property type="entry name" value="VirE2"/>
    <property type="match status" value="1"/>
</dbReference>
<reference key="1">
    <citation type="journal article" date="1987" name="J. Bacteriol.">
        <title>Characterization of the virE locus of Agrobacterium tumefaciens plasmid pTiC58.</title>
        <authorList>
            <person name="Hirooka T."/>
            <person name="Rogowsky P.M."/>
            <person name="Kado C.I."/>
        </authorList>
    </citation>
    <scope>NUCLEOTIDE SEQUENCE [GENOMIC DNA]</scope>
</reference>
<reference key="2">
    <citation type="journal article" date="1990" name="Plasmid">
        <title>Molecular characterization of the vir regulon of Agrobacterium tumefaciens: complete nucleotide sequence and gene organization of the 28.63-kbp regulon cloned as a single unit.</title>
        <authorList>
            <person name="Rogowsky P.M."/>
            <person name="Powell B.S."/>
            <person name="Shirasu K."/>
            <person name="Lin T.-S."/>
            <person name="Morel P."/>
            <person name="Zyprian E.M."/>
            <person name="Steck T.R."/>
            <person name="Kado C.I."/>
        </authorList>
    </citation>
    <scope>NUCLEOTIDE SEQUENCE [GENOMIC DNA]</scope>
</reference>
<reference key="3">
    <citation type="journal article" date="2001" name="Science">
        <title>The genome of the natural genetic engineer Agrobacterium tumefaciens C58.</title>
        <authorList>
            <person name="Wood D.W."/>
            <person name="Setubal J.C."/>
            <person name="Kaul R."/>
            <person name="Monks D.E."/>
            <person name="Kitajima J.P."/>
            <person name="Okura V.K."/>
            <person name="Zhou Y."/>
            <person name="Chen L."/>
            <person name="Wood G.E."/>
            <person name="Almeida N.F. Jr."/>
            <person name="Woo L."/>
            <person name="Chen Y."/>
            <person name="Paulsen I.T."/>
            <person name="Eisen J.A."/>
            <person name="Karp P.D."/>
            <person name="Bovee D. Sr."/>
            <person name="Chapman P."/>
            <person name="Clendenning J."/>
            <person name="Deatherage G."/>
            <person name="Gillet W."/>
            <person name="Grant C."/>
            <person name="Kutyavin T."/>
            <person name="Levy R."/>
            <person name="Li M.-J."/>
            <person name="McClelland E."/>
            <person name="Palmieri A."/>
            <person name="Raymond C."/>
            <person name="Rouse G."/>
            <person name="Saenphimmachak C."/>
            <person name="Wu Z."/>
            <person name="Romero P."/>
            <person name="Gordon D."/>
            <person name="Zhang S."/>
            <person name="Yoo H."/>
            <person name="Tao Y."/>
            <person name="Biddle P."/>
            <person name="Jung M."/>
            <person name="Krespan W."/>
            <person name="Perry M."/>
            <person name="Gordon-Kamm B."/>
            <person name="Liao L."/>
            <person name="Kim S."/>
            <person name="Hendrick C."/>
            <person name="Zhao Z.-Y."/>
            <person name="Dolan M."/>
            <person name="Chumley F."/>
            <person name="Tingey S.V."/>
            <person name="Tomb J.-F."/>
            <person name="Gordon M.P."/>
            <person name="Olson M.V."/>
            <person name="Nester E.W."/>
        </authorList>
    </citation>
    <scope>NUCLEOTIDE SEQUENCE [LARGE SCALE GENOMIC DNA]</scope>
</reference>
<reference key="4">
    <citation type="journal article" date="2001" name="Science">
        <title>Genome sequence of the plant pathogen and biotechnology agent Agrobacterium tumefaciens C58.</title>
        <authorList>
            <person name="Goodner B."/>
            <person name="Hinkle G."/>
            <person name="Gattung S."/>
            <person name="Miller N."/>
            <person name="Blanchard M."/>
            <person name="Qurollo B."/>
            <person name="Goldman B.S."/>
            <person name="Cao Y."/>
            <person name="Askenazi M."/>
            <person name="Halling C."/>
            <person name="Mullin L."/>
            <person name="Houmiel K."/>
            <person name="Gordon J."/>
            <person name="Vaudin M."/>
            <person name="Iartchouk O."/>
            <person name="Epp A."/>
            <person name="Liu F."/>
            <person name="Wollam C."/>
            <person name="Allinger M."/>
            <person name="Doughty D."/>
            <person name="Scott C."/>
            <person name="Lappas C."/>
            <person name="Markelz B."/>
            <person name="Flanagan C."/>
            <person name="Crowell C."/>
            <person name="Gurson J."/>
            <person name="Lomo C."/>
            <person name="Sear C."/>
            <person name="Strub G."/>
            <person name="Cielo C."/>
            <person name="Slater S."/>
        </authorList>
    </citation>
    <scope>NUCLEOTIDE SEQUENCE [LARGE SCALE GENOMIC DNA]</scope>
    <source>
        <strain>C58 / ATCC 33970</strain>
    </source>
</reference>
<reference key="5">
    <citation type="journal article" date="1988" name="Science">
        <title>Single-stranded DNA binding protein encoded by the virE locus of Agrobacterium tumefaciens.</title>
        <authorList>
            <person name="Citovsky V."/>
            <person name="de Vos G."/>
            <person name="Zambryski P."/>
        </authorList>
    </citation>
    <scope>FUNCTION</scope>
</reference>
<reference key="6">
    <citation type="journal article" date="1996" name="Proc. Natl. Acad. Sci. U.S.A.">
        <title>Agrobacterium VirE2 protein mediates nuclear uptake of single-stranded DNA in plant cells.</title>
        <authorList>
            <person name="Zupan J.R."/>
            <person name="Citovsky V."/>
            <person name="Zambryski P."/>
        </authorList>
    </citation>
    <scope>FUNCTION</scope>
</reference>
<reference key="7">
    <citation type="journal article" date="1992" name="Science">
        <title>Nuclear localization of Agrobacterium VirE2 protein in plant cells.</title>
        <authorList>
            <person name="Citovsky V."/>
            <person name="Zupan J."/>
            <person name="Warnick D."/>
            <person name="Zambryski P."/>
        </authorList>
    </citation>
    <scope>SUBCELLULAR LOCATION</scope>
</reference>
<reference key="8">
    <citation type="journal article" date="2002" name="Proc. Natl. Acad. Sci. U.S.A.">
        <title>Increasing plant susceptibility to Agrobacterium infection by overexpression of the Arabidopsis nuclear protein VIP1.</title>
        <authorList>
            <person name="Tzfira T."/>
            <person name="Vaidya M."/>
            <person name="Citovsky V."/>
        </authorList>
    </citation>
    <scope>FUNCTION</scope>
    <scope>INTERACTION WITH ARABIDOPSIS VIP1</scope>
</reference>
<reference key="9">
    <citation type="journal article" date="2008" name="Proc. Natl. Acad. Sci. U.S.A.">
        <title>Crystal structure of the Agrobacterium virulence complex VirE1-VirE2 reveals a flexible protein that can accommodate different partners.</title>
        <authorList>
            <person name="Dym O."/>
            <person name="Albeck S."/>
            <person name="Unger T."/>
            <person name="Jacobovitch J."/>
            <person name="Branzburg A."/>
            <person name="Michael Y."/>
            <person name="Frenkiel-Krispin D."/>
            <person name="Wolf S.G."/>
            <person name="Elbaum M."/>
        </authorList>
    </citation>
    <scope>X-RAY CRYSTALLOGRAPHY (2.30 ANGSTROMS) IN COMPLEX WITH VIRE1</scope>
</reference>
<sequence length="556" mass="63345">MDPKAEGNGENITETAAGNVETSDFVNLKRQKREGVNSTGMSEIDMTGSQETPEHNMHGSPTHTDDLGPRLDADMLDSQSSHVSSSAQGNRSEVENELSNLFAKMALPGHDRRTDEYILVRQTGQDKFAGTTKCNLDHLPTKAEFNASCRLYRDGVGNYYPPPLAFERIDIPEQLAAQLHNLEPREQSKQCFQYKLEVWNRAHAEMGITGTDIFYQTDKNIKLDRNYKLRPEDRYIQTEKYGRREIQKRYEHQFQAGSLLPDILIKTPQNDIHFSYRFAGDAYANKRFEEFERAIKTKYGSDTEIKLKSKSGIMHDSKYLESWERGSADIRFAEFAGENRAHNKQFPAATVNMGRQPDGQGGMTRDRHVSVDYLLQNLPNSPWTQALKEGKLWDRVQVLARDGNRYMSPSRLEYSDPEHFTQLMDQVGLPVSMGRQSHANSVKFEQFDRQAAVIVADGPNLREVPDLSPEKLQQLSQKDVLIADRNEKGQRTGTYTNVVEYERLMMKLPSDAAQLLAEPSDRYSRAFVRPEPALPPISDSRRTYESRPRGPTVNSL</sequence>